<reference key="1">
    <citation type="journal article" date="1996" name="DNA Res.">
        <title>A 570-kb DNA sequence of the Escherichia coli K-12 genome corresponding to the 28.0-40.1 min region on the linkage map.</title>
        <authorList>
            <person name="Aiba H."/>
            <person name="Baba T."/>
            <person name="Fujita K."/>
            <person name="Hayashi K."/>
            <person name="Inada T."/>
            <person name="Isono K."/>
            <person name="Itoh T."/>
            <person name="Kasai H."/>
            <person name="Kashimoto K."/>
            <person name="Kimura S."/>
            <person name="Kitakawa M."/>
            <person name="Kitagawa M."/>
            <person name="Makino K."/>
            <person name="Miki T."/>
            <person name="Mizobuchi K."/>
            <person name="Mori H."/>
            <person name="Mori T."/>
            <person name="Motomura K."/>
            <person name="Nakade S."/>
            <person name="Nakamura Y."/>
            <person name="Nashimoto H."/>
            <person name="Nishio Y."/>
            <person name="Oshima T."/>
            <person name="Saito N."/>
            <person name="Sampei G."/>
            <person name="Seki Y."/>
            <person name="Sivasundaram S."/>
            <person name="Tagami H."/>
            <person name="Takeda J."/>
            <person name="Takemoto K."/>
            <person name="Takeuchi Y."/>
            <person name="Wada C."/>
            <person name="Yamamoto Y."/>
            <person name="Horiuchi T."/>
        </authorList>
    </citation>
    <scope>NUCLEOTIDE SEQUENCE [LARGE SCALE GENOMIC DNA]</scope>
    <source>
        <strain>K12 / W3110 / ATCC 27325 / DSM 5911</strain>
    </source>
</reference>
<reference key="2">
    <citation type="journal article" date="1997" name="Science">
        <title>The complete genome sequence of Escherichia coli K-12.</title>
        <authorList>
            <person name="Blattner F.R."/>
            <person name="Plunkett G. III"/>
            <person name="Bloch C.A."/>
            <person name="Perna N.T."/>
            <person name="Burland V."/>
            <person name="Riley M."/>
            <person name="Collado-Vides J."/>
            <person name="Glasner J.D."/>
            <person name="Rode C.K."/>
            <person name="Mayhew G.F."/>
            <person name="Gregor J."/>
            <person name="Davis N.W."/>
            <person name="Kirkpatrick H.A."/>
            <person name="Goeden M.A."/>
            <person name="Rose D.J."/>
            <person name="Mau B."/>
            <person name="Shao Y."/>
        </authorList>
    </citation>
    <scope>NUCLEOTIDE SEQUENCE [LARGE SCALE GENOMIC DNA]</scope>
    <source>
        <strain>K12 / MG1655 / ATCC 47076</strain>
    </source>
</reference>
<reference key="3">
    <citation type="journal article" date="2006" name="Mol. Syst. Biol.">
        <title>Highly accurate genome sequences of Escherichia coli K-12 strains MG1655 and W3110.</title>
        <authorList>
            <person name="Hayashi K."/>
            <person name="Morooka N."/>
            <person name="Yamamoto Y."/>
            <person name="Fujita K."/>
            <person name="Isono K."/>
            <person name="Choi S."/>
            <person name="Ohtsubo E."/>
            <person name="Baba T."/>
            <person name="Wanner B.L."/>
            <person name="Mori H."/>
            <person name="Horiuchi T."/>
        </authorList>
    </citation>
    <scope>NUCLEOTIDE SEQUENCE [LARGE SCALE GENOMIC DNA]</scope>
    <scope>SEQUENCE REVISION TO 284-285</scope>
    <source>
        <strain>K12 / W3110 / ATCC 27325 / DSM 5911</strain>
    </source>
</reference>
<proteinExistence type="inferred from homology"/>
<feature type="chain" id="PRO_0000201894" description="Uncharacterized protein YdhJ">
    <location>
        <begin position="1"/>
        <end position="285"/>
    </location>
</feature>
<feature type="transmembrane region" description="Helical" evidence="1">
    <location>
        <begin position="6"/>
        <end position="26"/>
    </location>
</feature>
<feature type="sequence conflict" description="In Ref. 1; no nucleotide entry." evidence="2" ref="1">
    <original>GQ</original>
    <variation>VNNERIVMVLAQFALVQGHAGAMALCVTQYHCHVSGADGCLLFKSG</variation>
    <location>
        <begin position="284"/>
        <end position="285"/>
    </location>
</feature>
<organism>
    <name type="scientific">Escherichia coli (strain K12)</name>
    <dbReference type="NCBI Taxonomy" id="83333"/>
    <lineage>
        <taxon>Bacteria</taxon>
        <taxon>Pseudomonadati</taxon>
        <taxon>Pseudomonadota</taxon>
        <taxon>Gammaproteobacteria</taxon>
        <taxon>Enterobacterales</taxon>
        <taxon>Enterobacteriaceae</taxon>
        <taxon>Escherichia</taxon>
    </lineage>
</organism>
<name>YDHJ_ECOLI</name>
<dbReference type="EMBL" id="U00096">
    <property type="protein sequence ID" value="AAC74716.2"/>
    <property type="molecule type" value="Genomic_DNA"/>
</dbReference>
<dbReference type="EMBL" id="AP009048">
    <property type="protein sequence ID" value="BAA15404.2"/>
    <property type="molecule type" value="Genomic_DNA"/>
</dbReference>
<dbReference type="PIR" id="F64921">
    <property type="entry name" value="F64921"/>
</dbReference>
<dbReference type="RefSeq" id="NP_416161.4">
    <property type="nucleotide sequence ID" value="NC_000913.3"/>
</dbReference>
<dbReference type="RefSeq" id="WP_001300356.1">
    <property type="nucleotide sequence ID" value="NZ_SSZK01000001.1"/>
</dbReference>
<dbReference type="SMR" id="P76185"/>
<dbReference type="BioGRID" id="4261300">
    <property type="interactions" value="388"/>
</dbReference>
<dbReference type="DIP" id="DIP-11733N"/>
<dbReference type="FunCoup" id="P76185">
    <property type="interactions" value="114"/>
</dbReference>
<dbReference type="IntAct" id="P76185">
    <property type="interactions" value="1"/>
</dbReference>
<dbReference type="STRING" id="511145.b1644"/>
<dbReference type="PaxDb" id="511145-b1644"/>
<dbReference type="EnsemblBacteria" id="AAC74716">
    <property type="protein sequence ID" value="AAC74716"/>
    <property type="gene ID" value="b1644"/>
</dbReference>
<dbReference type="GeneID" id="946499"/>
<dbReference type="KEGG" id="ecj:JW1636"/>
<dbReference type="KEGG" id="eco:b1644"/>
<dbReference type="KEGG" id="ecoc:C3026_09440"/>
<dbReference type="PATRIC" id="fig|1411691.4.peg.615"/>
<dbReference type="EchoBASE" id="EB3702"/>
<dbReference type="eggNOG" id="COG1566">
    <property type="taxonomic scope" value="Bacteria"/>
</dbReference>
<dbReference type="HOGENOM" id="CLU_018816_15_2_6"/>
<dbReference type="InParanoid" id="P76185"/>
<dbReference type="OMA" id="NPSFNWV"/>
<dbReference type="OrthoDB" id="9811754at2"/>
<dbReference type="PhylomeDB" id="P76185"/>
<dbReference type="BioCyc" id="EcoCyc:G6884-MONOMER"/>
<dbReference type="PRO" id="PR:P76185"/>
<dbReference type="Proteomes" id="UP000000625">
    <property type="component" value="Chromosome"/>
</dbReference>
<dbReference type="GO" id="GO:0016020">
    <property type="term" value="C:membrane"/>
    <property type="evidence" value="ECO:0007669"/>
    <property type="project" value="UniProtKB-SubCell"/>
</dbReference>
<dbReference type="GO" id="GO:0022857">
    <property type="term" value="F:transmembrane transporter activity"/>
    <property type="evidence" value="ECO:0000318"/>
    <property type="project" value="GO_Central"/>
</dbReference>
<dbReference type="GO" id="GO:0009636">
    <property type="term" value="P:response to toxic substance"/>
    <property type="evidence" value="ECO:0007669"/>
    <property type="project" value="UniProtKB-ARBA"/>
</dbReference>
<dbReference type="GO" id="GO:0055085">
    <property type="term" value="P:transmembrane transport"/>
    <property type="evidence" value="ECO:0000318"/>
    <property type="project" value="GO_Central"/>
</dbReference>
<dbReference type="Gene3D" id="2.40.30.170">
    <property type="match status" value="1"/>
</dbReference>
<dbReference type="Gene3D" id="2.40.50.100">
    <property type="match status" value="1"/>
</dbReference>
<dbReference type="Gene3D" id="1.10.287.470">
    <property type="entry name" value="Helix hairpin bin"/>
    <property type="match status" value="1"/>
</dbReference>
<dbReference type="InterPro" id="IPR043602">
    <property type="entry name" value="CusB-like_dom_1"/>
</dbReference>
<dbReference type="InterPro" id="IPR032317">
    <property type="entry name" value="CusB_D23"/>
</dbReference>
<dbReference type="InterPro" id="IPR050393">
    <property type="entry name" value="MFP_Efflux_Pump"/>
</dbReference>
<dbReference type="InterPro" id="IPR006143">
    <property type="entry name" value="RND_pump_MFP"/>
</dbReference>
<dbReference type="NCBIfam" id="TIGR01730">
    <property type="entry name" value="RND_mfp"/>
    <property type="match status" value="1"/>
</dbReference>
<dbReference type="PANTHER" id="PTHR30367:SF13">
    <property type="entry name" value="MULTIDRUG RESISTANCE EFFLUX PUMP"/>
    <property type="match status" value="1"/>
</dbReference>
<dbReference type="PANTHER" id="PTHR30367">
    <property type="entry name" value="P-HYDROXYBENZOIC ACID EFFLUX PUMP SUBUNIT AAEA-RELATED"/>
    <property type="match status" value="1"/>
</dbReference>
<dbReference type="Pfam" id="PF00529">
    <property type="entry name" value="CusB_dom_1"/>
    <property type="match status" value="1"/>
</dbReference>
<dbReference type="Pfam" id="PF16576">
    <property type="entry name" value="HlyD_D23"/>
    <property type="match status" value="1"/>
</dbReference>
<dbReference type="SUPFAM" id="SSF111369">
    <property type="entry name" value="HlyD-like secretion proteins"/>
    <property type="match status" value="1"/>
</dbReference>
<comment type="subcellular location">
    <subcellularLocation>
        <location evidence="2">Membrane</location>
        <topology evidence="2">Single-pass membrane protein</topology>
    </subcellularLocation>
</comment>
<comment type="similarity">
    <text evidence="2">Belongs to the membrane fusion protein (MFP) (TC 8.A.1) family.</text>
</comment>
<sequence length="285" mass="31496">MSIKTIKYFSTIIVAVVAVLAGWWLWNYYMQSPWTRDGKIRAEQVSITPQVSGRIVELNIKDNQLVNAGDLLLTIDKTPFQIAELNAQAQLAKAQSDLAKANNEANRRRHLSQNFISAEELDTANLNVKAMQASVDAAQATLKQAQWQLAQTEIRAPVSGWVTNLTTRIGDYADTGKPLFALVDSHSFYVIGYFEETKLRHIREGAPAQITLYSDNKTLQGHVSSIGRAIYDQSVESDSSLIPDVKPNVPWVRLAQRVPVRFALDKVPGDVTLVSGTTCSIAVGQ</sequence>
<gene>
    <name type="primary">ydhJ</name>
    <name type="ordered locus">b1644</name>
    <name type="ordered locus">JW1636</name>
</gene>
<evidence type="ECO:0000255" key="1"/>
<evidence type="ECO:0000305" key="2"/>
<accession>P76185</accession>
<accession>P76893</accession>
<keyword id="KW-0472">Membrane</keyword>
<keyword id="KW-1185">Reference proteome</keyword>
<keyword id="KW-0812">Transmembrane</keyword>
<keyword id="KW-1133">Transmembrane helix</keyword>
<protein>
    <recommendedName>
        <fullName>Uncharacterized protein YdhJ</fullName>
    </recommendedName>
</protein>